<sequence>MTDVPVSRIRNFSIIAHIDHGKSTLADRLLEATGTVSAREMKPQLLDNMELERERGITIKLQAARMNYRAQDGQDYVLNLIDTPGHVDFTYEVSRSLAACEGALLVVDASQGVEAQTLANVYLALENNLEIIPVINKIDLPGAEPERVIAEIEQVIGLDCSGAILASAKMGIGIPEILEAIVQRVPPPRDTVADPLRALIFDSYYDSYRGVIVYVRIMDGEVKTGDKICFMASGREYEITELGVMRPHQESVASLHAGEVGYIAAAIKSVEHARVGDTITLVHRKASEPLPGYKEAKPMVFCGLFPSNSDQYAELKEALEKLKLNDAALYFEPEVSPAMGFGFRCGFLGLLHMEVVQERLEREYNLDLVITAPTVVYQVTLNDGSVIRVDNPSKLPPPNERTSIEEPIVRVEVILPEEFVGTVMELCETKRGTFKDMKYLAQGRTTLVYELPLAEVVTDFFDQLKSRTRGYASMDYQMVGYRADDLVRLDILINGDVVDSLSTIVHRDKAFYVGRSLVAKLRELIPRHQFEVPIQAAIGSRVIARETIPALRKNVLAKCYGGDVTRKRKLLEKQKEGKKRMKAVGTVEVPQEAFMAVLKLQND</sequence>
<feature type="chain" id="PRO_0000265718" description="Elongation factor 4">
    <location>
        <begin position="1"/>
        <end position="603"/>
    </location>
</feature>
<feature type="domain" description="tr-type G">
    <location>
        <begin position="7"/>
        <end position="189"/>
    </location>
</feature>
<feature type="binding site" evidence="1">
    <location>
        <begin position="19"/>
        <end position="24"/>
    </location>
    <ligand>
        <name>GTP</name>
        <dbReference type="ChEBI" id="CHEBI:37565"/>
    </ligand>
</feature>
<feature type="binding site" evidence="1">
    <location>
        <begin position="136"/>
        <end position="139"/>
    </location>
    <ligand>
        <name>GTP</name>
        <dbReference type="ChEBI" id="CHEBI:37565"/>
    </ligand>
</feature>
<comment type="function">
    <text evidence="1">Required for accurate and efficient protein synthesis under certain stress conditions. May act as a fidelity factor of the translation reaction, by catalyzing a one-codon backward translocation of tRNAs on improperly translocated ribosomes. Back-translocation proceeds from a post-translocation (POST) complex to a pre-translocation (PRE) complex, thus giving elongation factor G a second chance to translocate the tRNAs correctly. Binds to ribosomes in a GTP-dependent manner.</text>
</comment>
<comment type="catalytic activity">
    <reaction evidence="1">
        <text>GTP + H2O = GDP + phosphate + H(+)</text>
        <dbReference type="Rhea" id="RHEA:19669"/>
        <dbReference type="ChEBI" id="CHEBI:15377"/>
        <dbReference type="ChEBI" id="CHEBI:15378"/>
        <dbReference type="ChEBI" id="CHEBI:37565"/>
        <dbReference type="ChEBI" id="CHEBI:43474"/>
        <dbReference type="ChEBI" id="CHEBI:58189"/>
        <dbReference type="EC" id="3.6.5.n1"/>
    </reaction>
</comment>
<comment type="subcellular location">
    <subcellularLocation>
        <location evidence="1">Cell inner membrane</location>
        <topology evidence="1">Peripheral membrane protein</topology>
        <orientation evidence="1">Cytoplasmic side</orientation>
    </subcellularLocation>
</comment>
<comment type="similarity">
    <text evidence="1">Belongs to the TRAFAC class translation factor GTPase superfamily. Classic translation factor GTPase family. LepA subfamily.</text>
</comment>
<keyword id="KW-0997">Cell inner membrane</keyword>
<keyword id="KW-1003">Cell membrane</keyword>
<keyword id="KW-0342">GTP-binding</keyword>
<keyword id="KW-0378">Hydrolase</keyword>
<keyword id="KW-0472">Membrane</keyword>
<keyword id="KW-0547">Nucleotide-binding</keyword>
<keyword id="KW-0648">Protein biosynthesis</keyword>
<dbReference type="EC" id="3.6.5.n1" evidence="1"/>
<dbReference type="EMBL" id="CP000239">
    <property type="protein sequence ID" value="ABC98798.1"/>
    <property type="molecule type" value="Genomic_DNA"/>
</dbReference>
<dbReference type="RefSeq" id="WP_011429485.1">
    <property type="nucleotide sequence ID" value="NC_007775.1"/>
</dbReference>
<dbReference type="SMR" id="Q2JWR1"/>
<dbReference type="STRING" id="321327.CYA_0582"/>
<dbReference type="KEGG" id="cya:CYA_0582"/>
<dbReference type="eggNOG" id="COG0481">
    <property type="taxonomic scope" value="Bacteria"/>
</dbReference>
<dbReference type="HOGENOM" id="CLU_009995_3_3_3"/>
<dbReference type="OrthoDB" id="580826at2"/>
<dbReference type="Proteomes" id="UP000008818">
    <property type="component" value="Chromosome"/>
</dbReference>
<dbReference type="GO" id="GO:0005886">
    <property type="term" value="C:plasma membrane"/>
    <property type="evidence" value="ECO:0007669"/>
    <property type="project" value="UniProtKB-SubCell"/>
</dbReference>
<dbReference type="GO" id="GO:0005525">
    <property type="term" value="F:GTP binding"/>
    <property type="evidence" value="ECO:0007669"/>
    <property type="project" value="UniProtKB-KW"/>
</dbReference>
<dbReference type="GO" id="GO:0003924">
    <property type="term" value="F:GTPase activity"/>
    <property type="evidence" value="ECO:0007669"/>
    <property type="project" value="InterPro"/>
</dbReference>
<dbReference type="GO" id="GO:0043022">
    <property type="term" value="F:ribosome binding"/>
    <property type="evidence" value="ECO:0007669"/>
    <property type="project" value="TreeGrafter"/>
</dbReference>
<dbReference type="GO" id="GO:0045727">
    <property type="term" value="P:positive regulation of translation"/>
    <property type="evidence" value="ECO:0007669"/>
    <property type="project" value="TreeGrafter"/>
</dbReference>
<dbReference type="GO" id="GO:0006412">
    <property type="term" value="P:translation"/>
    <property type="evidence" value="ECO:0007669"/>
    <property type="project" value="UniProtKB-KW"/>
</dbReference>
<dbReference type="CDD" id="cd03699">
    <property type="entry name" value="EF4_II"/>
    <property type="match status" value="1"/>
</dbReference>
<dbReference type="CDD" id="cd16260">
    <property type="entry name" value="EF4_III"/>
    <property type="match status" value="1"/>
</dbReference>
<dbReference type="CDD" id="cd01890">
    <property type="entry name" value="LepA"/>
    <property type="match status" value="1"/>
</dbReference>
<dbReference type="CDD" id="cd03709">
    <property type="entry name" value="lepA_C"/>
    <property type="match status" value="1"/>
</dbReference>
<dbReference type="FunFam" id="3.40.50.300:FF:000078">
    <property type="entry name" value="Elongation factor 4"/>
    <property type="match status" value="1"/>
</dbReference>
<dbReference type="FunFam" id="2.40.30.10:FF:000015">
    <property type="entry name" value="Translation factor GUF1, mitochondrial"/>
    <property type="match status" value="1"/>
</dbReference>
<dbReference type="FunFam" id="3.30.70.240:FF:000007">
    <property type="entry name" value="Translation factor GUF1, mitochondrial"/>
    <property type="match status" value="1"/>
</dbReference>
<dbReference type="FunFam" id="3.30.70.2570:FF:000001">
    <property type="entry name" value="Translation factor GUF1, mitochondrial"/>
    <property type="match status" value="1"/>
</dbReference>
<dbReference type="FunFam" id="3.30.70.870:FF:000004">
    <property type="entry name" value="Translation factor GUF1, mitochondrial"/>
    <property type="match status" value="1"/>
</dbReference>
<dbReference type="Gene3D" id="3.30.70.240">
    <property type="match status" value="1"/>
</dbReference>
<dbReference type="Gene3D" id="3.30.70.2570">
    <property type="entry name" value="Elongation factor 4, C-terminal domain"/>
    <property type="match status" value="1"/>
</dbReference>
<dbReference type="Gene3D" id="3.30.70.870">
    <property type="entry name" value="Elongation Factor G (Translational Gtpase), domain 3"/>
    <property type="match status" value="1"/>
</dbReference>
<dbReference type="Gene3D" id="3.40.50.300">
    <property type="entry name" value="P-loop containing nucleotide triphosphate hydrolases"/>
    <property type="match status" value="1"/>
</dbReference>
<dbReference type="Gene3D" id="2.40.30.10">
    <property type="entry name" value="Translation factors"/>
    <property type="match status" value="1"/>
</dbReference>
<dbReference type="HAMAP" id="MF_03138">
    <property type="entry name" value="GUFP"/>
    <property type="match status" value="1"/>
</dbReference>
<dbReference type="HAMAP" id="MF_00071">
    <property type="entry name" value="LepA"/>
    <property type="match status" value="1"/>
</dbReference>
<dbReference type="InterPro" id="IPR006297">
    <property type="entry name" value="EF-4"/>
</dbReference>
<dbReference type="InterPro" id="IPR035647">
    <property type="entry name" value="EFG_III/V"/>
</dbReference>
<dbReference type="InterPro" id="IPR000640">
    <property type="entry name" value="EFG_V-like"/>
</dbReference>
<dbReference type="InterPro" id="IPR004161">
    <property type="entry name" value="EFTu-like_2"/>
</dbReference>
<dbReference type="InterPro" id="IPR031157">
    <property type="entry name" value="G_TR_CS"/>
</dbReference>
<dbReference type="InterPro" id="IPR027518">
    <property type="entry name" value="GUFP"/>
</dbReference>
<dbReference type="InterPro" id="IPR038363">
    <property type="entry name" value="LepA_C_sf"/>
</dbReference>
<dbReference type="InterPro" id="IPR013842">
    <property type="entry name" value="LepA_CTD"/>
</dbReference>
<dbReference type="InterPro" id="IPR035654">
    <property type="entry name" value="LepA_IV"/>
</dbReference>
<dbReference type="InterPro" id="IPR027417">
    <property type="entry name" value="P-loop_NTPase"/>
</dbReference>
<dbReference type="InterPro" id="IPR005225">
    <property type="entry name" value="Small_GTP-bd"/>
</dbReference>
<dbReference type="InterPro" id="IPR000795">
    <property type="entry name" value="T_Tr_GTP-bd_dom"/>
</dbReference>
<dbReference type="NCBIfam" id="TIGR01393">
    <property type="entry name" value="lepA"/>
    <property type="match status" value="1"/>
</dbReference>
<dbReference type="NCBIfam" id="TIGR00231">
    <property type="entry name" value="small_GTP"/>
    <property type="match status" value="1"/>
</dbReference>
<dbReference type="PANTHER" id="PTHR43512:SF4">
    <property type="entry name" value="TRANSLATION FACTOR GUF1 HOMOLOG, CHLOROPLASTIC"/>
    <property type="match status" value="1"/>
</dbReference>
<dbReference type="PANTHER" id="PTHR43512">
    <property type="entry name" value="TRANSLATION FACTOR GUF1-RELATED"/>
    <property type="match status" value="1"/>
</dbReference>
<dbReference type="Pfam" id="PF00679">
    <property type="entry name" value="EFG_C"/>
    <property type="match status" value="1"/>
</dbReference>
<dbReference type="Pfam" id="PF00009">
    <property type="entry name" value="GTP_EFTU"/>
    <property type="match status" value="1"/>
</dbReference>
<dbReference type="Pfam" id="PF03144">
    <property type="entry name" value="GTP_EFTU_D2"/>
    <property type="match status" value="1"/>
</dbReference>
<dbReference type="Pfam" id="PF06421">
    <property type="entry name" value="LepA_C"/>
    <property type="match status" value="1"/>
</dbReference>
<dbReference type="PRINTS" id="PR00315">
    <property type="entry name" value="ELONGATNFCT"/>
</dbReference>
<dbReference type="SMART" id="SM00838">
    <property type="entry name" value="EFG_C"/>
    <property type="match status" value="1"/>
</dbReference>
<dbReference type="SUPFAM" id="SSF54980">
    <property type="entry name" value="EF-G C-terminal domain-like"/>
    <property type="match status" value="2"/>
</dbReference>
<dbReference type="SUPFAM" id="SSF52540">
    <property type="entry name" value="P-loop containing nucleoside triphosphate hydrolases"/>
    <property type="match status" value="1"/>
</dbReference>
<dbReference type="PROSITE" id="PS00301">
    <property type="entry name" value="G_TR_1"/>
    <property type="match status" value="1"/>
</dbReference>
<dbReference type="PROSITE" id="PS51722">
    <property type="entry name" value="G_TR_2"/>
    <property type="match status" value="1"/>
</dbReference>
<protein>
    <recommendedName>
        <fullName evidence="1">Elongation factor 4</fullName>
        <shortName evidence="1">EF-4</shortName>
        <ecNumber evidence="1">3.6.5.n1</ecNumber>
    </recommendedName>
    <alternativeName>
        <fullName evidence="1">Ribosomal back-translocase LepA</fullName>
    </alternativeName>
</protein>
<evidence type="ECO:0000255" key="1">
    <source>
        <dbReference type="HAMAP-Rule" id="MF_00071"/>
    </source>
</evidence>
<proteinExistence type="inferred from homology"/>
<organism>
    <name type="scientific">Synechococcus sp. (strain JA-3-3Ab)</name>
    <name type="common">Cyanobacteria bacterium Yellowstone A-Prime</name>
    <dbReference type="NCBI Taxonomy" id="321327"/>
    <lineage>
        <taxon>Bacteria</taxon>
        <taxon>Bacillati</taxon>
        <taxon>Cyanobacteriota</taxon>
        <taxon>Cyanophyceae</taxon>
        <taxon>Synechococcales</taxon>
        <taxon>Synechococcaceae</taxon>
        <taxon>Synechococcus</taxon>
    </lineage>
</organism>
<gene>
    <name evidence="1" type="primary">lepA</name>
    <name type="ordered locus">CYA_0582</name>
</gene>
<name>LEPA_SYNJA</name>
<accession>Q2JWR1</accession>
<reference key="1">
    <citation type="journal article" date="2007" name="ISME J.">
        <title>Population level functional diversity in a microbial community revealed by comparative genomic and metagenomic analyses.</title>
        <authorList>
            <person name="Bhaya D."/>
            <person name="Grossman A.R."/>
            <person name="Steunou A.-S."/>
            <person name="Khuri N."/>
            <person name="Cohan F.M."/>
            <person name="Hamamura N."/>
            <person name="Melendrez M.C."/>
            <person name="Bateson M.M."/>
            <person name="Ward D.M."/>
            <person name="Heidelberg J.F."/>
        </authorList>
    </citation>
    <scope>NUCLEOTIDE SEQUENCE [LARGE SCALE GENOMIC DNA]</scope>
    <source>
        <strain>JA-3-3Ab</strain>
    </source>
</reference>